<name>Y8328_DICDI</name>
<accession>Q55GD2</accession>
<feature type="chain" id="PRO_0000393566" description="Protein DDB_G0268328">
    <location>
        <begin position="1"/>
        <end position="3779"/>
    </location>
</feature>
<feature type="region of interest" description="Disordered" evidence="1">
    <location>
        <begin position="24"/>
        <end position="56"/>
    </location>
</feature>
<feature type="region of interest" description="Disordered" evidence="1">
    <location>
        <begin position="1001"/>
        <end position="1028"/>
    </location>
</feature>
<feature type="region of interest" description="Disordered" evidence="1">
    <location>
        <begin position="1137"/>
        <end position="1165"/>
    </location>
</feature>
<feature type="region of interest" description="Disordered" evidence="1">
    <location>
        <begin position="1513"/>
        <end position="1538"/>
    </location>
</feature>
<feature type="region of interest" description="Disordered" evidence="1">
    <location>
        <begin position="1656"/>
        <end position="1690"/>
    </location>
</feature>
<feature type="region of interest" description="Disordered" evidence="1">
    <location>
        <begin position="2027"/>
        <end position="2054"/>
    </location>
</feature>
<feature type="region of interest" description="Disordered" evidence="1">
    <location>
        <begin position="2144"/>
        <end position="2184"/>
    </location>
</feature>
<feature type="region of interest" description="Disordered" evidence="1">
    <location>
        <begin position="2280"/>
        <end position="2325"/>
    </location>
</feature>
<feature type="region of interest" description="Disordered" evidence="1">
    <location>
        <begin position="2508"/>
        <end position="2527"/>
    </location>
</feature>
<feature type="region of interest" description="Disordered" evidence="1">
    <location>
        <begin position="2720"/>
        <end position="2748"/>
    </location>
</feature>
<feature type="region of interest" description="Disordered" evidence="1">
    <location>
        <begin position="2975"/>
        <end position="3030"/>
    </location>
</feature>
<feature type="region of interest" description="Disordered" evidence="1">
    <location>
        <begin position="3427"/>
        <end position="3450"/>
    </location>
</feature>
<feature type="compositionally biased region" description="Low complexity" evidence="1">
    <location>
        <begin position="26"/>
        <end position="56"/>
    </location>
</feature>
<feature type="compositionally biased region" description="Low complexity" evidence="1">
    <location>
        <begin position="1011"/>
        <end position="1020"/>
    </location>
</feature>
<feature type="compositionally biased region" description="Low complexity" evidence="1">
    <location>
        <begin position="1149"/>
        <end position="1165"/>
    </location>
</feature>
<feature type="compositionally biased region" description="Low complexity" evidence="1">
    <location>
        <begin position="1515"/>
        <end position="1538"/>
    </location>
</feature>
<feature type="compositionally biased region" description="Basic and acidic residues" evidence="1">
    <location>
        <begin position="1656"/>
        <end position="1671"/>
    </location>
</feature>
<feature type="compositionally biased region" description="Low complexity" evidence="1">
    <location>
        <begin position="1672"/>
        <end position="1687"/>
    </location>
</feature>
<feature type="compositionally biased region" description="Low complexity" evidence="1">
    <location>
        <begin position="2144"/>
        <end position="2182"/>
    </location>
</feature>
<feature type="compositionally biased region" description="Low complexity" evidence="1">
    <location>
        <begin position="2285"/>
        <end position="2322"/>
    </location>
</feature>
<feature type="compositionally biased region" description="Low complexity" evidence="1">
    <location>
        <begin position="2722"/>
        <end position="2745"/>
    </location>
</feature>
<feature type="compositionally biased region" description="Low complexity" evidence="1">
    <location>
        <begin position="3015"/>
        <end position="3030"/>
    </location>
</feature>
<feature type="compositionally biased region" description="Gly residues" evidence="1">
    <location>
        <begin position="3433"/>
        <end position="3446"/>
    </location>
</feature>
<organism>
    <name type="scientific">Dictyostelium discoideum</name>
    <name type="common">Social amoeba</name>
    <dbReference type="NCBI Taxonomy" id="44689"/>
    <lineage>
        <taxon>Eukaryota</taxon>
        <taxon>Amoebozoa</taxon>
        <taxon>Evosea</taxon>
        <taxon>Eumycetozoa</taxon>
        <taxon>Dictyostelia</taxon>
        <taxon>Dictyosteliales</taxon>
        <taxon>Dictyosteliaceae</taxon>
        <taxon>Dictyostelium</taxon>
    </lineage>
</organism>
<sequence>METLSVLLRTFKRDNQSSIYKKNRQIKSQNKLQNKSQNNGNNNNNKDNNNINKDGSNYYQIFKDNRDSNNFDCKLSIDLNYIAFSISDNKKLIITSLYYNKNNIASTNSSPSSSLSSSSSSVFLFNSVLNNNNNNNNNNSNNNSYTYKQPYYYYHQQQQQHQYQQQQQQQHHFGSHHHHFFSHNSSFYKEYIDKDIQILRFYQQQQTSEDYKIEIEGISEVFQYSWMSPKVQKEPISLYNNSNNDNTTIPSNLVVLDNNQSSLHLLSIFKNLTTINPQDSQQSLQNSSSSIKISDIKLNKTLCIISPIVQQPQQQPQQQQQQQQQQQQQQQQQQQQQQQQQQPNQITIKTFKNYLLHHFILPYQKILEQLDLPQNTTSCIEILSSDDQGNLVLLVEKSVIALFKIKQIDSLNFIFFIQRRFNLSIGNSKKEYYQNITTIINNDNNNNKSSEEDKPIHLVKYIDKWLFIVNRLDGETSIWNINGKKRGIFQLKSLLNKDKIITSKFSEINEISISSDLMSIVYKCQNDQLYVLSLDYCFQNTITQQLSTIGLINYCHTNKIDDECDIFSPSSFISPIISGADQQEQQQQQQQLPTLIDPIDSEDSDDEELYSNAEDITNKNEIFQFHWFETTESSLKLQDNKKEFGQLAQWIPKKNSNSYALNGFTVYNNNNNLNALYNPNGNNSGNNSGRMSRENSFVFNNNKVLGKSQSIADDLYKEMNNNNEQLSSSSSPSILVKSNSNNNFQQVQQQLNDSLYSLIIPSLEDLDNDNKVLINTELFITPKLIVYQKDYRVTISSGINNNGDDEYDDDDDNDDNSQFKTEFYLYDRNKIDRRSIEIIQGRVLTVKLLDQSFYHLTENGINSILVDTNQQQILNNLIMLEGAESANHLCSLNQWNKRDLKVHALHLGLKYRQLDVVEPALASLDMDQQFIGSRLLINIILENSANAANSNVHNESFTNELLHIGMNFIGIIIKDRAQLVHQSLKKHNQNQTKMDLYNKDHEDEEEEGDGDNSNNSNSQDSDGDDDDDLKKILQKVNDIPIPEASITTTTTTTTENNHIEQQVKQIGNINWTETLTTPLNSSTFLDNHQQQSSASASLNQLLSIDDQKQQQPNTPIQDLLLFTKILEALRLFQKEKQDSTLPKRKQHGYYHQQQQQQQYHQQQQQQQQQTYNQLLITQMNDMGSWFPPGLIDRWERMEELEIIKESLNNGNISTLISYINWKREKKGLLYHQQQSSSSSQDSLSSHNDLTFPHLKFISGSGPFTFNDIQKISCCFVYQAISQDQLEVAIKLLKTIGTPIVPNLKQLAFHTSRRNIRNQILDLLLNHPMFKNNNDDDDDDGENNKFFTAQVLELIDFRSKLDKLYPNFSYHREFSRLSFKWRPLLESKPPLLIQQQQQLQQYYQLQNKQQQYQYPIKLFSFDLYSDDDIKIQSQEVDDLLPNTEHHYGFQLITHGNASLQQTNVYSSGFLRTSSPMVANNNNGGINNNGGDIGSGTGNSTPTGYRNRIILYPPPTNSIYNNNNNNNNNNNNTNSSSLLSNSINGNQLQHIPQTMDGYSHYTLNWLSKWSTDTKERILIDKKYKMEKRNIISKLFHSINHNQHQSVLDWVNQLSLKEIQSLRDLVLKRFIIVKNNHKTTTTTTKKIIVKRIKNSSKKETTVLEKETKETKDNNLENNNNNTNNSNNNNNNKEDIEDNKQEILLYNSIIESLKTSTQFVRDMFLNHLAKNRIFLLDVESSPWFYIENQYKSFSVDKNYLLMKRLAYNHLLFPEFNDDSISSSDGIKSLFKSHSYPLNKLLPIFTSTNHDENNGNNSNVENGGSGEDLRQQLDFHKFFIEFCIKNRLYLLLSSYLSSYRLANNWSERKLLDIELESNQFVSNDIQAQLLLLFKSRSKVDFIKSNILNLVSLLSDNINTNNNNNNSGNSDEKLKLQNQQKMKQQLQINLSSFDNSFNIQNQLDQFYNIINNVIEKYPNKPLIALASMIYSPINFKDLMSGITDQGIKLQSKQLLSKIKKQYPTTFKILEKLSNSSNNNNNNNDGSTTSTTTLNRSDSNNNLRQLIKPRDIITSKQDITLSELLESNSLFSLSHLFGSTDQDSQRLLIGDFRLQSFKEGYLDRIDVFYYLEKGRPLKAFNHLCKSLSKINNNNNNNNNNNNNNNNNNNNNNNNNNNNNNNNNNNNNNNSSIDIIDGDNGYEIKFSNKEQRNLIGWLIRTFTLKRINRKESVSSAIALMDLCKMYEYSTLIRTDVSVLQCILSNQSNITPHQYSPLLLSSSFNGENISTTANNNNNNNNNNNNNNNNNNNNNNNNNNNNNNNNNNNNNNEQQDTLNSYQIESIELFLSLYKTPESLLEIMTLSLGGKTSTSSSNTASVPYPGSPIQRIISRFENTISIDEPLVAVKTDDENNNNNNNNDNSSSSTPILKNNWYLLSKFCQCHHVAKLTRQLEHLASSGNWLEFIYQAQIQDFPLQQIKEIIYEKVNSIGIKSHLLLVLEQLSNDRKRQYINHHHQINNNNNNNEKEEEEEREEGINNSELLINSMNYYPIEESKLSNDIIGYLLSSYRSNNPRNYLLYNATKDKRPLLAVIANCIDRNQNDLSTIECLVTWLCVCTTNLSKFLSGNDNVTIDDSFDFDLDALNISLDHHVVPNIKKYNYQDLINSVQYIIQNRKSFILLQGFKIFLPNNILLNYLKFINQFHQYRFEDSEESLRLFINDLFDFKGGDGNNNNNNNNNQNNNNQNNNNNQNNNDSSIYFKSKDSVKKMVVEICENLLEMFSSYEREHFIGILHRSGISYTFSTLYSTLNLLKRTQMQDKSIHMDPKLIVQHLIEKGLFKDARTYSLENHLDKDLVTVAEVDALINHYQQGCLWEIEQERINLWKKCQQYFIQHQSKPDIAGELFYNRGNNIQPSREKVFLLSIAVEWFEKSYFENINTDNIVGSGSGNTTQLTPTKSSSITTTFIEDLKKQILLLSVGLSNQESNDRPFDDDGSYEDFSPSTSPARSITFPRGTNRGSGGFKSVNNNNNNNSNSDSIKNSSQNLLSYFTSPMASPSSSLSSSPIDHHDSPIKDYAQRNRKFQLISSSGTNSSFSTSPLQQPSFVSSIKDNKTTTTTTTTSVSSVISPIKSIQLEPKALDNVLSKLLNSNQLFEAEQIVQQFNYKSIDYDLISTMLKIVNRTISPNPNQFPQELINELSRDYNTSRWLKASQQSQFQSSSTFTGASGNGNGGNSGFEISVENILSTLENLSSCCTLAKQAAKAIINKFNVSEKLSMGYSELLISNPYDIINQLLLLGKDCFRLIKSYIFTNHLDIDKINDQLADLFSETIINQYNKSHQSTSSSGSTSPNMSILSLSLDDQPGRVGEGKSNGIDPNWTSEEFHEYIRIGRDPFTFGMKLIEATRINYESYFSVDNSPGIFGNTGMGSYVSPSLKQQSNTLNGTGGGGGNGGGNNGSGKLSSPIGMEAEVEMFVRAHFCFVIACSVDGTILVLNMVKSRVNYYADAGKYKLLVRLITGMQCYNELQSIFDILLQHNQFELLLRKKIHQHEDQNGLKLALHSYLMKKQPLYQDKLEMLFLRFNMYREIALNNEQKARSRLESLGKMVDNHYGGSGIGGNKSNSSLNSNSSKQELLSIMKDFLDAADNYSKERSQRTAQTCISMGALIALQIKSPEIPIINLRQNQAKHSMTIRPFFKESLIIANAYNLNAYSEWIDVLFYQVLANGNFNYLNDYISYFSHSNLFYSDLIKRYKADTTKSGKLQHVRNIIQNVIVDKNLKNELEKELTNYK</sequence>
<dbReference type="EMBL" id="AAFI02000003">
    <property type="protein sequence ID" value="EAL73617.1"/>
    <property type="molecule type" value="Genomic_DNA"/>
</dbReference>
<dbReference type="RefSeq" id="XP_647252.1">
    <property type="nucleotide sequence ID" value="XM_642160.1"/>
</dbReference>
<dbReference type="FunCoup" id="Q55GD2">
    <property type="interactions" value="27"/>
</dbReference>
<dbReference type="STRING" id="44689.Q55GD2"/>
<dbReference type="PaxDb" id="44689-DDB0234039"/>
<dbReference type="EnsemblProtists" id="EAL73617">
    <property type="protein sequence ID" value="EAL73617"/>
    <property type="gene ID" value="DDB_G0268328"/>
</dbReference>
<dbReference type="GeneID" id="8616057"/>
<dbReference type="KEGG" id="ddi:DDB_G0268328"/>
<dbReference type="dictyBase" id="DDB_G0268328"/>
<dbReference type="VEuPathDB" id="AmoebaDB:DDB_G0268328"/>
<dbReference type="eggNOG" id="KOG1884">
    <property type="taxonomic scope" value="Eukaryota"/>
</dbReference>
<dbReference type="HOGENOM" id="CLU_224350_0_0_1"/>
<dbReference type="InParanoid" id="Q55GD2"/>
<dbReference type="OMA" id="KIHQHED"/>
<dbReference type="PRO" id="PR:Q55GD2"/>
<dbReference type="Proteomes" id="UP000002195">
    <property type="component" value="Chromosome 1"/>
</dbReference>
<dbReference type="GO" id="GO:0005737">
    <property type="term" value="C:cytoplasm"/>
    <property type="evidence" value="ECO:0000318"/>
    <property type="project" value="GO_Central"/>
</dbReference>
<dbReference type="InterPro" id="IPR028103">
    <property type="entry name" value="Spatacsin"/>
</dbReference>
<dbReference type="InterPro" id="IPR028107">
    <property type="entry name" value="Spatacsin_C_dom"/>
</dbReference>
<dbReference type="PANTHER" id="PTHR13650">
    <property type="entry name" value="SPATACSIN"/>
    <property type="match status" value="1"/>
</dbReference>
<dbReference type="PANTHER" id="PTHR13650:SF0">
    <property type="entry name" value="SPATACSIN"/>
    <property type="match status" value="1"/>
</dbReference>
<dbReference type="Pfam" id="PF14649">
    <property type="entry name" value="Spatacsin_C"/>
    <property type="match status" value="1"/>
</dbReference>
<evidence type="ECO:0000256" key="1">
    <source>
        <dbReference type="SAM" id="MobiDB-lite"/>
    </source>
</evidence>
<reference key="1">
    <citation type="journal article" date="2005" name="Nature">
        <title>The genome of the social amoeba Dictyostelium discoideum.</title>
        <authorList>
            <person name="Eichinger L."/>
            <person name="Pachebat J.A."/>
            <person name="Gloeckner G."/>
            <person name="Rajandream M.A."/>
            <person name="Sucgang R."/>
            <person name="Berriman M."/>
            <person name="Song J."/>
            <person name="Olsen R."/>
            <person name="Szafranski K."/>
            <person name="Xu Q."/>
            <person name="Tunggal B."/>
            <person name="Kummerfeld S."/>
            <person name="Madera M."/>
            <person name="Konfortov B.A."/>
            <person name="Rivero F."/>
            <person name="Bankier A.T."/>
            <person name="Lehmann R."/>
            <person name="Hamlin N."/>
            <person name="Davies R."/>
            <person name="Gaudet P."/>
            <person name="Fey P."/>
            <person name="Pilcher K."/>
            <person name="Chen G."/>
            <person name="Saunders D."/>
            <person name="Sodergren E.J."/>
            <person name="Davis P."/>
            <person name="Kerhornou A."/>
            <person name="Nie X."/>
            <person name="Hall N."/>
            <person name="Anjard C."/>
            <person name="Hemphill L."/>
            <person name="Bason N."/>
            <person name="Farbrother P."/>
            <person name="Desany B."/>
            <person name="Just E."/>
            <person name="Morio T."/>
            <person name="Rost R."/>
            <person name="Churcher C.M."/>
            <person name="Cooper J."/>
            <person name="Haydock S."/>
            <person name="van Driessche N."/>
            <person name="Cronin A."/>
            <person name="Goodhead I."/>
            <person name="Muzny D.M."/>
            <person name="Mourier T."/>
            <person name="Pain A."/>
            <person name="Lu M."/>
            <person name="Harper D."/>
            <person name="Lindsay R."/>
            <person name="Hauser H."/>
            <person name="James K.D."/>
            <person name="Quiles M."/>
            <person name="Madan Babu M."/>
            <person name="Saito T."/>
            <person name="Buchrieser C."/>
            <person name="Wardroper A."/>
            <person name="Felder M."/>
            <person name="Thangavelu M."/>
            <person name="Johnson D."/>
            <person name="Knights A."/>
            <person name="Loulseged H."/>
            <person name="Mungall K.L."/>
            <person name="Oliver K."/>
            <person name="Price C."/>
            <person name="Quail M.A."/>
            <person name="Urushihara H."/>
            <person name="Hernandez J."/>
            <person name="Rabbinowitsch E."/>
            <person name="Steffen D."/>
            <person name="Sanders M."/>
            <person name="Ma J."/>
            <person name="Kohara Y."/>
            <person name="Sharp S."/>
            <person name="Simmonds M.N."/>
            <person name="Spiegler S."/>
            <person name="Tivey A."/>
            <person name="Sugano S."/>
            <person name="White B."/>
            <person name="Walker D."/>
            <person name="Woodward J.R."/>
            <person name="Winckler T."/>
            <person name="Tanaka Y."/>
            <person name="Shaulsky G."/>
            <person name="Schleicher M."/>
            <person name="Weinstock G.M."/>
            <person name="Rosenthal A."/>
            <person name="Cox E.C."/>
            <person name="Chisholm R.L."/>
            <person name="Gibbs R.A."/>
            <person name="Loomis W.F."/>
            <person name="Platzer M."/>
            <person name="Kay R.R."/>
            <person name="Williams J.G."/>
            <person name="Dear P.H."/>
            <person name="Noegel A.A."/>
            <person name="Barrell B.G."/>
            <person name="Kuspa A."/>
        </authorList>
    </citation>
    <scope>NUCLEOTIDE SEQUENCE [LARGE SCALE GENOMIC DNA]</scope>
    <source>
        <strain>AX4</strain>
    </source>
</reference>
<protein>
    <recommendedName>
        <fullName>Protein DDB_G0268328</fullName>
    </recommendedName>
</protein>
<keyword id="KW-1185">Reference proteome</keyword>
<gene>
    <name type="ORF">DDB_G0268328</name>
</gene>
<proteinExistence type="predicted"/>